<gene>
    <name evidence="1" type="primary">ubiA</name>
    <name type="ordered locus">BMA10247_2582</name>
</gene>
<name>UBIA_BURM7</name>
<dbReference type="EC" id="2.5.1.39" evidence="1"/>
<dbReference type="EMBL" id="CP000548">
    <property type="protein sequence ID" value="ABO07231.1"/>
    <property type="molecule type" value="Genomic_DNA"/>
</dbReference>
<dbReference type="RefSeq" id="WP_004194359.1">
    <property type="nucleotide sequence ID" value="NZ_CP007802.1"/>
</dbReference>
<dbReference type="SMR" id="A3MPC2"/>
<dbReference type="GeneID" id="92980092"/>
<dbReference type="KEGG" id="bmaz:BM44_732"/>
<dbReference type="KEGG" id="bmn:BMA10247_2582"/>
<dbReference type="PATRIC" id="fig|320389.8.peg.807"/>
<dbReference type="UniPathway" id="UPA00232"/>
<dbReference type="GO" id="GO:0005886">
    <property type="term" value="C:plasma membrane"/>
    <property type="evidence" value="ECO:0007669"/>
    <property type="project" value="UniProtKB-SubCell"/>
</dbReference>
<dbReference type="GO" id="GO:0008412">
    <property type="term" value="F:4-hydroxybenzoate polyprenyltransferase activity"/>
    <property type="evidence" value="ECO:0007669"/>
    <property type="project" value="UniProtKB-UniRule"/>
</dbReference>
<dbReference type="GO" id="GO:0006744">
    <property type="term" value="P:ubiquinone biosynthetic process"/>
    <property type="evidence" value="ECO:0007669"/>
    <property type="project" value="UniProtKB-UniRule"/>
</dbReference>
<dbReference type="CDD" id="cd13959">
    <property type="entry name" value="PT_UbiA_COQ2"/>
    <property type="match status" value="1"/>
</dbReference>
<dbReference type="FunFam" id="1.10.357.140:FF:000002">
    <property type="entry name" value="4-hydroxybenzoate octaprenyltransferase"/>
    <property type="match status" value="1"/>
</dbReference>
<dbReference type="FunFam" id="1.20.120.1780:FF:000001">
    <property type="entry name" value="4-hydroxybenzoate octaprenyltransferase"/>
    <property type="match status" value="1"/>
</dbReference>
<dbReference type="Gene3D" id="1.10.357.140">
    <property type="entry name" value="UbiA prenyltransferase"/>
    <property type="match status" value="1"/>
</dbReference>
<dbReference type="Gene3D" id="1.20.120.1780">
    <property type="entry name" value="UbiA prenyltransferase"/>
    <property type="match status" value="1"/>
</dbReference>
<dbReference type="HAMAP" id="MF_01635">
    <property type="entry name" value="UbiA"/>
    <property type="match status" value="1"/>
</dbReference>
<dbReference type="InterPro" id="IPR006370">
    <property type="entry name" value="HB_polyprenyltransferase-like"/>
</dbReference>
<dbReference type="InterPro" id="IPR039653">
    <property type="entry name" value="Prenyltransferase"/>
</dbReference>
<dbReference type="InterPro" id="IPR000537">
    <property type="entry name" value="UbiA_prenyltransferase"/>
</dbReference>
<dbReference type="InterPro" id="IPR030470">
    <property type="entry name" value="UbiA_prenylTrfase_CS"/>
</dbReference>
<dbReference type="InterPro" id="IPR044878">
    <property type="entry name" value="UbiA_sf"/>
</dbReference>
<dbReference type="NCBIfam" id="TIGR01474">
    <property type="entry name" value="ubiA_proteo"/>
    <property type="match status" value="1"/>
</dbReference>
<dbReference type="PANTHER" id="PTHR11048:SF28">
    <property type="entry name" value="4-HYDROXYBENZOATE POLYPRENYLTRANSFERASE, MITOCHONDRIAL"/>
    <property type="match status" value="1"/>
</dbReference>
<dbReference type="PANTHER" id="PTHR11048">
    <property type="entry name" value="PRENYLTRANSFERASES"/>
    <property type="match status" value="1"/>
</dbReference>
<dbReference type="Pfam" id="PF01040">
    <property type="entry name" value="UbiA"/>
    <property type="match status" value="1"/>
</dbReference>
<dbReference type="PROSITE" id="PS00943">
    <property type="entry name" value="UBIA"/>
    <property type="match status" value="1"/>
</dbReference>
<proteinExistence type="inferred from homology"/>
<accession>A3MPC2</accession>
<feature type="chain" id="PRO_1000069810" description="4-hydroxybenzoate octaprenyltransferase">
    <location>
        <begin position="1"/>
        <end position="287"/>
    </location>
</feature>
<feature type="transmembrane region" description="Helical" evidence="1">
    <location>
        <begin position="30"/>
        <end position="50"/>
    </location>
</feature>
<feature type="transmembrane region" description="Helical" evidence="1">
    <location>
        <begin position="92"/>
        <end position="112"/>
    </location>
</feature>
<feature type="transmembrane region" description="Helical" evidence="1">
    <location>
        <begin position="133"/>
        <end position="153"/>
    </location>
</feature>
<feature type="transmembrane region" description="Helical" evidence="1">
    <location>
        <begin position="158"/>
        <end position="178"/>
    </location>
</feature>
<feature type="transmembrane region" description="Helical" evidence="1">
    <location>
        <begin position="207"/>
        <end position="227"/>
    </location>
</feature>
<feature type="transmembrane region" description="Helical" evidence="1">
    <location>
        <begin position="232"/>
        <end position="252"/>
    </location>
</feature>
<feature type="transmembrane region" description="Helical" evidence="1">
    <location>
        <begin position="266"/>
        <end position="286"/>
    </location>
</feature>
<organism>
    <name type="scientific">Burkholderia mallei (strain NCTC 10247)</name>
    <dbReference type="NCBI Taxonomy" id="320389"/>
    <lineage>
        <taxon>Bacteria</taxon>
        <taxon>Pseudomonadati</taxon>
        <taxon>Pseudomonadota</taxon>
        <taxon>Betaproteobacteria</taxon>
        <taxon>Burkholderiales</taxon>
        <taxon>Burkholderiaceae</taxon>
        <taxon>Burkholderia</taxon>
        <taxon>pseudomallei group</taxon>
    </lineage>
</organism>
<sequence>MLARFPLYLRLIRMDKPIGSLLLLWPTLNALWIASDGHPAPSLVVIFALGTLLMRSAGCAINDYADRDFDRHVKRTAERPLTSGKIRAWEAIAIAVGLALVSFLLILPLNGLTKELSVVAVFVAATYPFMKRFFAIPQAYLGIAFGFGIPMAFAAVQDTVPMIAWAMLAANVFWSVAYDTAYAMVDRDDDLKIGMRTSAITFGRHDVLAIMLCYAAMLGIYVWLGAALHFGWPYWAGWAAAAGCSIYHYTLIKDRERMACFAAFRHNNWLGGVLFAGIAAHYALAVR</sequence>
<reference key="1">
    <citation type="journal article" date="2010" name="Genome Biol. Evol.">
        <title>Continuing evolution of Burkholderia mallei through genome reduction and large-scale rearrangements.</title>
        <authorList>
            <person name="Losada L."/>
            <person name="Ronning C.M."/>
            <person name="DeShazer D."/>
            <person name="Woods D."/>
            <person name="Fedorova N."/>
            <person name="Kim H.S."/>
            <person name="Shabalina S.A."/>
            <person name="Pearson T.R."/>
            <person name="Brinkac L."/>
            <person name="Tan P."/>
            <person name="Nandi T."/>
            <person name="Crabtree J."/>
            <person name="Badger J."/>
            <person name="Beckstrom-Sternberg S."/>
            <person name="Saqib M."/>
            <person name="Schutzer S.E."/>
            <person name="Keim P."/>
            <person name="Nierman W.C."/>
        </authorList>
    </citation>
    <scope>NUCLEOTIDE SEQUENCE [LARGE SCALE GENOMIC DNA]</scope>
    <source>
        <strain>NCTC 10247</strain>
    </source>
</reference>
<keyword id="KW-0997">Cell inner membrane</keyword>
<keyword id="KW-1003">Cell membrane</keyword>
<keyword id="KW-0460">Magnesium</keyword>
<keyword id="KW-0472">Membrane</keyword>
<keyword id="KW-0808">Transferase</keyword>
<keyword id="KW-0812">Transmembrane</keyword>
<keyword id="KW-1133">Transmembrane helix</keyword>
<keyword id="KW-0831">Ubiquinone biosynthesis</keyword>
<comment type="function">
    <text evidence="1">Catalyzes the prenylation of para-hydroxybenzoate (PHB) with an all-trans polyprenyl group. Mediates the second step in the final reaction sequence of ubiquinone-8 (UQ-8) biosynthesis, which is the condensation of the polyisoprenoid side chain with PHB, generating the first membrane-bound Q intermediate 3-octaprenyl-4-hydroxybenzoate.</text>
</comment>
<comment type="catalytic activity">
    <reaction evidence="1">
        <text>all-trans-octaprenyl diphosphate + 4-hydroxybenzoate = 4-hydroxy-3-(all-trans-octaprenyl)benzoate + diphosphate</text>
        <dbReference type="Rhea" id="RHEA:27782"/>
        <dbReference type="ChEBI" id="CHEBI:1617"/>
        <dbReference type="ChEBI" id="CHEBI:17879"/>
        <dbReference type="ChEBI" id="CHEBI:33019"/>
        <dbReference type="ChEBI" id="CHEBI:57711"/>
        <dbReference type="EC" id="2.5.1.39"/>
    </reaction>
</comment>
<comment type="cofactor">
    <cofactor evidence="1">
        <name>Mg(2+)</name>
        <dbReference type="ChEBI" id="CHEBI:18420"/>
    </cofactor>
</comment>
<comment type="pathway">
    <text evidence="1">Cofactor biosynthesis; ubiquinone biosynthesis.</text>
</comment>
<comment type="subcellular location">
    <subcellularLocation>
        <location evidence="1">Cell inner membrane</location>
        <topology evidence="1">Multi-pass membrane protein</topology>
    </subcellularLocation>
</comment>
<comment type="similarity">
    <text evidence="1">Belongs to the UbiA prenyltransferase family.</text>
</comment>
<evidence type="ECO:0000255" key="1">
    <source>
        <dbReference type="HAMAP-Rule" id="MF_01635"/>
    </source>
</evidence>
<protein>
    <recommendedName>
        <fullName evidence="1">4-hydroxybenzoate octaprenyltransferase</fullName>
        <ecNumber evidence="1">2.5.1.39</ecNumber>
    </recommendedName>
    <alternativeName>
        <fullName evidence="1">4-HB polyprenyltransferase</fullName>
    </alternativeName>
</protein>